<sequence length="33" mass="3290">GVLGTVKNLLIGAGKSAAQSVLKTLSCKLSNDC</sequence>
<organism evidence="3">
    <name type="scientific">Odorrana grahami</name>
    <name type="common">Yunnanfu frog</name>
    <name type="synonym">Rana grahami</name>
    <dbReference type="NCBI Taxonomy" id="167935"/>
    <lineage>
        <taxon>Eukaryota</taxon>
        <taxon>Metazoa</taxon>
        <taxon>Chordata</taxon>
        <taxon>Craniata</taxon>
        <taxon>Vertebrata</taxon>
        <taxon>Euteleostomi</taxon>
        <taxon>Amphibia</taxon>
        <taxon>Batrachia</taxon>
        <taxon>Anura</taxon>
        <taxon>Neobatrachia</taxon>
        <taxon>Ranoidea</taxon>
        <taxon>Ranidae</taxon>
        <taxon>Odorrana</taxon>
    </lineage>
</organism>
<accession>C0HL70</accession>
<dbReference type="SMR" id="C0HL70"/>
<dbReference type="GO" id="GO:0005576">
    <property type="term" value="C:extracellular region"/>
    <property type="evidence" value="ECO:0007669"/>
    <property type="project" value="UniProtKB-SubCell"/>
</dbReference>
<dbReference type="GO" id="GO:0050829">
    <property type="term" value="P:defense response to Gram-negative bacterium"/>
    <property type="evidence" value="ECO:0000314"/>
    <property type="project" value="UniProtKB"/>
</dbReference>
<dbReference type="GO" id="GO:0050830">
    <property type="term" value="P:defense response to Gram-positive bacterium"/>
    <property type="evidence" value="ECO:0000314"/>
    <property type="project" value="UniProtKB"/>
</dbReference>
<dbReference type="GO" id="GO:0031640">
    <property type="term" value="P:killing of cells of another organism"/>
    <property type="evidence" value="ECO:0000314"/>
    <property type="project" value="UniProtKB"/>
</dbReference>
<dbReference type="InterPro" id="IPR012521">
    <property type="entry name" value="Antimicrobial_frog_2"/>
</dbReference>
<dbReference type="Pfam" id="PF08023">
    <property type="entry name" value="Antimicrobial_2"/>
    <property type="match status" value="1"/>
</dbReference>
<evidence type="ECO:0000250" key="1">
    <source>
        <dbReference type="UniProtKB" id="C0HL03"/>
    </source>
</evidence>
<evidence type="ECO:0000269" key="2">
    <source>
    </source>
</evidence>
<evidence type="ECO:0000303" key="3">
    <source>
    </source>
</evidence>
<evidence type="ECO:0000305" key="4"/>
<evidence type="ECO:0000305" key="5">
    <source>
    </source>
</evidence>
<protein>
    <recommendedName>
        <fullName evidence="3">Brevinin-2GRb</fullName>
    </recommendedName>
</protein>
<keyword id="KW-0044">Antibiotic</keyword>
<keyword id="KW-0929">Antimicrobial</keyword>
<keyword id="KW-0903">Direct protein sequencing</keyword>
<keyword id="KW-0964">Secreted</keyword>
<proteinExistence type="evidence at protein level"/>
<comment type="function">
    <text evidence="2">Antimicrobial peptide active against the Gram-positive bacterium S.aureus (MIC=25 uM) and against the Gram-negative bacteria E.coli (MIC=6 uM). Has no antifungal activity against C.albicans. Shows hemolytic activity against human erythrocytes only at high concentrations (LC(50)=180 uM).</text>
</comment>
<comment type="subcellular location">
    <subcellularLocation>
        <location evidence="1">Secreted</location>
    </subcellularLocation>
</comment>
<comment type="tissue specificity">
    <text evidence="5">Expressed by the skin glands.</text>
</comment>
<comment type="mass spectrometry" mass="3286.0" method="MALDI" evidence="2"/>
<comment type="similarity">
    <text evidence="4">Belongs to the frog skin active peptide (FSAP) family. Brevinin subfamily.</text>
</comment>
<reference evidence="4" key="1">
    <citation type="journal article" date="2006" name="Peptides">
        <title>Antimicrobial peptides from diverse families isolated from the skin of the Asian frog, Rana grahami.</title>
        <authorList>
            <person name="Conlon J.M."/>
            <person name="Al-Ghaferi N."/>
            <person name="Abraham B."/>
            <person name="Jiansheng H."/>
            <person name="Cosette P."/>
            <person name="Leprince J."/>
            <person name="Jouenne T."/>
            <person name="Vaudry H."/>
        </authorList>
    </citation>
    <scope>PROTEIN SEQUENCE</scope>
    <scope>FUNCTION</scope>
    <scope>MASS SPECTROMETRY</scope>
    <source>
        <tissue evidence="3">Skin</tissue>
    </source>
</reference>
<feature type="peptide" id="PRO_0000443433" description="Brevinin-2GRb" evidence="2">
    <location>
        <begin position="1"/>
        <end position="33"/>
    </location>
</feature>
<name>BR2B_ODOGR</name>